<organism>
    <name type="scientific">Bifidobacterium longum (strain DJO10A)</name>
    <dbReference type="NCBI Taxonomy" id="205913"/>
    <lineage>
        <taxon>Bacteria</taxon>
        <taxon>Bacillati</taxon>
        <taxon>Actinomycetota</taxon>
        <taxon>Actinomycetes</taxon>
        <taxon>Bifidobacteriales</taxon>
        <taxon>Bifidobacteriaceae</taxon>
        <taxon>Bifidobacterium</taxon>
    </lineage>
</organism>
<accession>B3DR89</accession>
<proteinExistence type="inferred from homology"/>
<sequence length="964" mass="107461">MVDIIDKALRMGEGHQLKKLENVAKAVNALEDEISALSDEDLKAQTPKFKQEIENGKSLDEIMPEAFATVREVSKRTLGQRHFDVQLMGGAALHWGNIAEMKTGEGKTLVATLPTYLNALEGKGVHVVTVNDYLASYQSELMGRIYRFLGMNVGCIITEQKPPERRKQYNADITYGTNNEFGFDYLRDNMAWEKADLVQRGHHYAIVDEVDSILIDEARTPLIISGPAEGDVTRWYRQFAKLVLKLTRDEDYDVDEKKKVVGILDPGITKVEDFLGIDNLYEPANTALIGYLNNAIKAKELFLRDKDYVVTQGEVLIVDEHTGRILPGRRYNEGLHQAIEAKEGVEVKAENQTFATITLQNYFRMYDKLAGMTGTAETEAAEFMNTYKLGVLPIKTNKPMIRKDQDDLIYRTKKEKLAAIVKDVAKRHAKGQPVLLGTASVESSEVVSTLLDVAKIPHQVLNAKQHEKEAAVVAVAGRKGAVTVATNMAGRGTDIMLGGNVEFLADAKLKSEGYSPEDTPEEYEKRWPGTLNEIKAQVKDEHEEVKELGGLYVLGTERHESRRIDNQLRGRSGRQGDPGESRFYLSLEDDLMRLFNTQLVAQVMAKGMEEGQPIEAKSVTKGVRTAQKAVESRNYEIRKNVLKYDDVMNKQRTVIYSERQAVLKGEDIHKDILRFISDTVESYIKGANKGSEKPKDWDWEGLFKALNTVIPTKVDEDEVRKIVGGLKGAKAVEAVRDLIVEDARQQYGEMEETIGETGLRDLERRVVLAVLDRKWREHLYEMDYLKDGIGLRGMGQRDPLVEYQREGYQMYNSMIEAIKEETVQLLFHIDIKQVATTDEAVDEVEETAESADTIAVASGPDENGESVVEAAEGEVEEEDEDTDAKQAIAESAAASGAGESTLPVAGPAPISHAEGKVPVSKRPKSEELKTPWADGRTFPGTGKNAPCPCGSGRKYKMCHGQNEK</sequence>
<keyword id="KW-0067">ATP-binding</keyword>
<keyword id="KW-1003">Cell membrane</keyword>
<keyword id="KW-0963">Cytoplasm</keyword>
<keyword id="KW-0472">Membrane</keyword>
<keyword id="KW-0479">Metal-binding</keyword>
<keyword id="KW-0547">Nucleotide-binding</keyword>
<keyword id="KW-0653">Protein transport</keyword>
<keyword id="KW-1278">Translocase</keyword>
<keyword id="KW-0811">Translocation</keyword>
<keyword id="KW-0813">Transport</keyword>
<keyword id="KW-0862">Zinc</keyword>
<protein>
    <recommendedName>
        <fullName evidence="1">Protein translocase subunit SecA</fullName>
        <ecNumber evidence="1">7.4.2.8</ecNumber>
    </recommendedName>
</protein>
<name>SECA_BIFLD</name>
<dbReference type="EC" id="7.4.2.8" evidence="1"/>
<dbReference type="EMBL" id="CP000605">
    <property type="protein sequence ID" value="ACD97733.1"/>
    <property type="molecule type" value="Genomic_DNA"/>
</dbReference>
<dbReference type="RefSeq" id="WP_007055154.1">
    <property type="nucleotide sequence ID" value="NZ_AABM02000001.1"/>
</dbReference>
<dbReference type="SMR" id="B3DR89"/>
<dbReference type="GeneID" id="69578406"/>
<dbReference type="KEGG" id="blj:BLD_0287"/>
<dbReference type="HOGENOM" id="CLU_005314_3_0_11"/>
<dbReference type="Proteomes" id="UP000002419">
    <property type="component" value="Chromosome"/>
</dbReference>
<dbReference type="GO" id="GO:0031522">
    <property type="term" value="C:cell envelope Sec protein transport complex"/>
    <property type="evidence" value="ECO:0007669"/>
    <property type="project" value="TreeGrafter"/>
</dbReference>
<dbReference type="GO" id="GO:0005829">
    <property type="term" value="C:cytosol"/>
    <property type="evidence" value="ECO:0007669"/>
    <property type="project" value="TreeGrafter"/>
</dbReference>
<dbReference type="GO" id="GO:0005886">
    <property type="term" value="C:plasma membrane"/>
    <property type="evidence" value="ECO:0007669"/>
    <property type="project" value="UniProtKB-SubCell"/>
</dbReference>
<dbReference type="GO" id="GO:0005524">
    <property type="term" value="F:ATP binding"/>
    <property type="evidence" value="ECO:0007669"/>
    <property type="project" value="UniProtKB-UniRule"/>
</dbReference>
<dbReference type="GO" id="GO:0046872">
    <property type="term" value="F:metal ion binding"/>
    <property type="evidence" value="ECO:0007669"/>
    <property type="project" value="UniProtKB-KW"/>
</dbReference>
<dbReference type="GO" id="GO:0008564">
    <property type="term" value="F:protein-exporting ATPase activity"/>
    <property type="evidence" value="ECO:0007669"/>
    <property type="project" value="UniProtKB-EC"/>
</dbReference>
<dbReference type="GO" id="GO:0065002">
    <property type="term" value="P:intracellular protein transmembrane transport"/>
    <property type="evidence" value="ECO:0007669"/>
    <property type="project" value="UniProtKB-UniRule"/>
</dbReference>
<dbReference type="GO" id="GO:0017038">
    <property type="term" value="P:protein import"/>
    <property type="evidence" value="ECO:0007669"/>
    <property type="project" value="InterPro"/>
</dbReference>
<dbReference type="GO" id="GO:0006605">
    <property type="term" value="P:protein targeting"/>
    <property type="evidence" value="ECO:0007669"/>
    <property type="project" value="UniProtKB-UniRule"/>
</dbReference>
<dbReference type="GO" id="GO:0043952">
    <property type="term" value="P:protein transport by the Sec complex"/>
    <property type="evidence" value="ECO:0007669"/>
    <property type="project" value="TreeGrafter"/>
</dbReference>
<dbReference type="CDD" id="cd17928">
    <property type="entry name" value="DEXDc_SecA"/>
    <property type="match status" value="1"/>
</dbReference>
<dbReference type="CDD" id="cd18803">
    <property type="entry name" value="SF2_C_secA"/>
    <property type="match status" value="1"/>
</dbReference>
<dbReference type="FunFam" id="3.40.50.300:FF:000113">
    <property type="entry name" value="Preprotein translocase subunit SecA"/>
    <property type="match status" value="1"/>
</dbReference>
<dbReference type="FunFam" id="3.40.50.300:FF:000334">
    <property type="entry name" value="Protein translocase subunit SecA"/>
    <property type="match status" value="1"/>
</dbReference>
<dbReference type="FunFam" id="3.90.1440.10:FF:000002">
    <property type="entry name" value="Protein translocase subunit SecA"/>
    <property type="match status" value="1"/>
</dbReference>
<dbReference type="Gene3D" id="3.10.450.50">
    <property type="match status" value="1"/>
</dbReference>
<dbReference type="Gene3D" id="1.10.3060.10">
    <property type="entry name" value="Helical scaffold and wing domains of SecA"/>
    <property type="match status" value="1"/>
</dbReference>
<dbReference type="Gene3D" id="3.40.50.300">
    <property type="entry name" value="P-loop containing nucleotide triphosphate hydrolases"/>
    <property type="match status" value="2"/>
</dbReference>
<dbReference type="Gene3D" id="3.90.1440.10">
    <property type="entry name" value="SecA, preprotein cross-linking domain"/>
    <property type="match status" value="1"/>
</dbReference>
<dbReference type="HAMAP" id="MF_01382">
    <property type="entry name" value="SecA"/>
    <property type="match status" value="1"/>
</dbReference>
<dbReference type="InterPro" id="IPR014001">
    <property type="entry name" value="Helicase_ATP-bd"/>
</dbReference>
<dbReference type="InterPro" id="IPR001650">
    <property type="entry name" value="Helicase_C-like"/>
</dbReference>
<dbReference type="InterPro" id="IPR027417">
    <property type="entry name" value="P-loop_NTPase"/>
</dbReference>
<dbReference type="InterPro" id="IPR004027">
    <property type="entry name" value="SEC_C_motif"/>
</dbReference>
<dbReference type="InterPro" id="IPR000185">
    <property type="entry name" value="SecA"/>
</dbReference>
<dbReference type="InterPro" id="IPR020937">
    <property type="entry name" value="SecA_CS"/>
</dbReference>
<dbReference type="InterPro" id="IPR011115">
    <property type="entry name" value="SecA_DEAD"/>
</dbReference>
<dbReference type="InterPro" id="IPR014018">
    <property type="entry name" value="SecA_motor_DEAD"/>
</dbReference>
<dbReference type="InterPro" id="IPR011130">
    <property type="entry name" value="SecA_preprotein_X-link_dom"/>
</dbReference>
<dbReference type="InterPro" id="IPR044722">
    <property type="entry name" value="SecA_SF2_C"/>
</dbReference>
<dbReference type="InterPro" id="IPR011116">
    <property type="entry name" value="SecA_Wing/Scaffold"/>
</dbReference>
<dbReference type="InterPro" id="IPR036266">
    <property type="entry name" value="SecA_Wing/Scaffold_sf"/>
</dbReference>
<dbReference type="InterPro" id="IPR036670">
    <property type="entry name" value="SecA_X-link_sf"/>
</dbReference>
<dbReference type="NCBIfam" id="NF009538">
    <property type="entry name" value="PRK12904.1"/>
    <property type="match status" value="1"/>
</dbReference>
<dbReference type="NCBIfam" id="TIGR00963">
    <property type="entry name" value="secA"/>
    <property type="match status" value="1"/>
</dbReference>
<dbReference type="PANTHER" id="PTHR30612:SF0">
    <property type="entry name" value="CHLOROPLAST PROTEIN-TRANSPORTING ATPASE"/>
    <property type="match status" value="1"/>
</dbReference>
<dbReference type="PANTHER" id="PTHR30612">
    <property type="entry name" value="SECA INNER MEMBRANE COMPONENT OF SEC PROTEIN SECRETION SYSTEM"/>
    <property type="match status" value="1"/>
</dbReference>
<dbReference type="Pfam" id="PF21090">
    <property type="entry name" value="P-loop_SecA"/>
    <property type="match status" value="1"/>
</dbReference>
<dbReference type="Pfam" id="PF02810">
    <property type="entry name" value="SEC-C"/>
    <property type="match status" value="1"/>
</dbReference>
<dbReference type="Pfam" id="PF07517">
    <property type="entry name" value="SecA_DEAD"/>
    <property type="match status" value="1"/>
</dbReference>
<dbReference type="Pfam" id="PF01043">
    <property type="entry name" value="SecA_PP_bind"/>
    <property type="match status" value="1"/>
</dbReference>
<dbReference type="Pfam" id="PF07516">
    <property type="entry name" value="SecA_SW"/>
    <property type="match status" value="1"/>
</dbReference>
<dbReference type="PRINTS" id="PR00906">
    <property type="entry name" value="SECA"/>
</dbReference>
<dbReference type="SMART" id="SM00957">
    <property type="entry name" value="SecA_DEAD"/>
    <property type="match status" value="1"/>
</dbReference>
<dbReference type="SMART" id="SM00958">
    <property type="entry name" value="SecA_PP_bind"/>
    <property type="match status" value="1"/>
</dbReference>
<dbReference type="SUPFAM" id="SSF81886">
    <property type="entry name" value="Helical scaffold and wing domains of SecA"/>
    <property type="match status" value="1"/>
</dbReference>
<dbReference type="SUPFAM" id="SSF52540">
    <property type="entry name" value="P-loop containing nucleoside triphosphate hydrolases"/>
    <property type="match status" value="2"/>
</dbReference>
<dbReference type="SUPFAM" id="SSF81767">
    <property type="entry name" value="Pre-protein crosslinking domain of SecA"/>
    <property type="match status" value="1"/>
</dbReference>
<dbReference type="PROSITE" id="PS01312">
    <property type="entry name" value="SECA"/>
    <property type="match status" value="1"/>
</dbReference>
<dbReference type="PROSITE" id="PS51196">
    <property type="entry name" value="SECA_MOTOR_DEAD"/>
    <property type="match status" value="1"/>
</dbReference>
<gene>
    <name evidence="1" type="primary">secA</name>
    <name type="ordered locus">BLD_0287</name>
</gene>
<reference key="1">
    <citation type="journal article" date="2008" name="BMC Genomics">
        <title>Comparative genomic analysis of the gut bacterium Bifidobacterium longum reveals loci susceptible to deletion during pure culture growth.</title>
        <authorList>
            <person name="Lee J.H."/>
            <person name="Karamychev V.N."/>
            <person name="Kozyavkin S.A."/>
            <person name="Mills D."/>
            <person name="Pavlov A.R."/>
            <person name="Pavlova N.V."/>
            <person name="Polouchine N.N."/>
            <person name="Richardson P.M."/>
            <person name="Shakhova V.V."/>
            <person name="Slesarev A.I."/>
            <person name="Weimer B."/>
            <person name="O'Sullivan D.J."/>
        </authorList>
    </citation>
    <scope>NUCLEOTIDE SEQUENCE [LARGE SCALE GENOMIC DNA]</scope>
    <source>
        <strain>DJO10A</strain>
    </source>
</reference>
<feature type="chain" id="PRO_1000144977" description="Protein translocase subunit SecA">
    <location>
        <begin position="1"/>
        <end position="964"/>
    </location>
</feature>
<feature type="region of interest" description="Disordered" evidence="2">
    <location>
        <begin position="848"/>
        <end position="964"/>
    </location>
</feature>
<feature type="compositionally biased region" description="Acidic residues" evidence="2">
    <location>
        <begin position="871"/>
        <end position="882"/>
    </location>
</feature>
<feature type="compositionally biased region" description="Low complexity" evidence="2">
    <location>
        <begin position="889"/>
        <end position="900"/>
    </location>
</feature>
<feature type="binding site" evidence="1">
    <location>
        <position position="86"/>
    </location>
    <ligand>
        <name>ATP</name>
        <dbReference type="ChEBI" id="CHEBI:30616"/>
    </ligand>
</feature>
<feature type="binding site" evidence="1">
    <location>
        <begin position="104"/>
        <end position="108"/>
    </location>
    <ligand>
        <name>ATP</name>
        <dbReference type="ChEBI" id="CHEBI:30616"/>
    </ligand>
</feature>
<feature type="binding site" evidence="1">
    <location>
        <position position="494"/>
    </location>
    <ligand>
        <name>ATP</name>
        <dbReference type="ChEBI" id="CHEBI:30616"/>
    </ligand>
</feature>
<feature type="binding site" evidence="1">
    <location>
        <position position="947"/>
    </location>
    <ligand>
        <name>Zn(2+)</name>
        <dbReference type="ChEBI" id="CHEBI:29105"/>
    </ligand>
</feature>
<feature type="binding site" evidence="1">
    <location>
        <position position="949"/>
    </location>
    <ligand>
        <name>Zn(2+)</name>
        <dbReference type="ChEBI" id="CHEBI:29105"/>
    </ligand>
</feature>
<feature type="binding site" evidence="1">
    <location>
        <position position="958"/>
    </location>
    <ligand>
        <name>Zn(2+)</name>
        <dbReference type="ChEBI" id="CHEBI:29105"/>
    </ligand>
</feature>
<feature type="binding site" evidence="1">
    <location>
        <position position="959"/>
    </location>
    <ligand>
        <name>Zn(2+)</name>
        <dbReference type="ChEBI" id="CHEBI:29105"/>
    </ligand>
</feature>
<evidence type="ECO:0000255" key="1">
    <source>
        <dbReference type="HAMAP-Rule" id="MF_01382"/>
    </source>
</evidence>
<evidence type="ECO:0000256" key="2">
    <source>
        <dbReference type="SAM" id="MobiDB-lite"/>
    </source>
</evidence>
<comment type="function">
    <text evidence="1">Part of the Sec protein translocase complex. Interacts with the SecYEG preprotein conducting channel. Has a central role in coupling the hydrolysis of ATP to the transfer of proteins into and across the cell membrane, serving as an ATP-driven molecular motor driving the stepwise translocation of polypeptide chains across the membrane.</text>
</comment>
<comment type="catalytic activity">
    <reaction evidence="1">
        <text>ATP + H2O + cellular proteinSide 1 = ADP + phosphate + cellular proteinSide 2.</text>
        <dbReference type="EC" id="7.4.2.8"/>
    </reaction>
</comment>
<comment type="cofactor">
    <cofactor evidence="1">
        <name>Zn(2+)</name>
        <dbReference type="ChEBI" id="CHEBI:29105"/>
    </cofactor>
    <text evidence="1">May bind 1 zinc ion per subunit.</text>
</comment>
<comment type="subunit">
    <text evidence="1">Monomer and homodimer. Part of the essential Sec protein translocation apparatus which comprises SecA, SecYEG and auxiliary proteins SecDF. Other proteins may also be involved.</text>
</comment>
<comment type="subcellular location">
    <subcellularLocation>
        <location evidence="1">Cell membrane</location>
        <topology evidence="1">Peripheral membrane protein</topology>
        <orientation evidence="1">Cytoplasmic side</orientation>
    </subcellularLocation>
    <subcellularLocation>
        <location evidence="1">Cytoplasm</location>
    </subcellularLocation>
    <text evidence="1">Distribution is 50-50.</text>
</comment>
<comment type="similarity">
    <text evidence="1">Belongs to the SecA family.</text>
</comment>